<accession>A2ASI5</accession>
<accession>A0A0R5RP23</accession>
<accession>A0A0R5RP41</accession>
<feature type="chain" id="PRO_0000444899" description="Sodium channel protein type 3 subunit alpha">
    <location>
        <begin position="1"/>
        <end position="1947"/>
    </location>
</feature>
<feature type="topological domain" description="Cytoplasmic" evidence="13">
    <location>
        <begin position="1"/>
        <end position="128"/>
    </location>
</feature>
<feature type="transmembrane region" description="Helical; Name=S1 of repeat I" evidence="5">
    <location>
        <begin position="129"/>
        <end position="146"/>
    </location>
</feature>
<feature type="topological domain" description="Extracellular" evidence="13">
    <location>
        <begin position="147"/>
        <end position="152"/>
    </location>
</feature>
<feature type="transmembrane region" description="Helical; Name=S2 of repeat I" evidence="5">
    <location>
        <begin position="153"/>
        <end position="174"/>
    </location>
</feature>
<feature type="topological domain" description="Cytoplasmic" evidence="13">
    <location>
        <begin position="175"/>
        <end position="188"/>
    </location>
</feature>
<feature type="transmembrane region" description="Helical; Name=S3 of repeat I" evidence="5">
    <location>
        <begin position="189"/>
        <end position="206"/>
    </location>
</feature>
<feature type="topological domain" description="Extracellular" evidence="13">
    <location>
        <begin position="207"/>
        <end position="213"/>
    </location>
</feature>
<feature type="transmembrane region" description="Helical; Name=S4 of repeat I" evidence="5">
    <location>
        <begin position="214"/>
        <end position="235"/>
    </location>
</feature>
<feature type="topological domain" description="Cytoplasmic" evidence="13">
    <location>
        <begin position="236"/>
        <end position="249"/>
    </location>
</feature>
<feature type="transmembrane region" description="Helical; Name=S5 of repeat I" evidence="5">
    <location>
        <begin position="250"/>
        <end position="269"/>
    </location>
</feature>
<feature type="topological domain" description="Extracellular" evidence="13">
    <location>
        <begin position="270"/>
        <end position="369"/>
    </location>
</feature>
<feature type="intramembrane region" description="Pore-forming" evidence="5">
    <location>
        <begin position="370"/>
        <end position="386"/>
    </location>
</feature>
<feature type="topological domain" description="Extracellular" evidence="13">
    <location>
        <begin position="387"/>
        <end position="397"/>
    </location>
</feature>
<feature type="transmembrane region" description="Helical; Name=S6 of repeat I" evidence="5">
    <location>
        <begin position="398"/>
        <end position="424"/>
    </location>
</feature>
<feature type="topological domain" description="Cytoplasmic" evidence="13">
    <location>
        <begin position="425"/>
        <end position="712"/>
    </location>
</feature>
<feature type="transmembrane region" description="Helical; Name=S1 of repeat II" evidence="5">
    <location>
        <begin position="713"/>
        <end position="730"/>
    </location>
</feature>
<feature type="topological domain" description="Extracellular" evidence="13">
    <location>
        <begin position="731"/>
        <end position="738"/>
    </location>
</feature>
<feature type="transmembrane region" description="Helical; Name=S2 of repeat II" evidence="5">
    <location>
        <begin position="739"/>
        <end position="763"/>
    </location>
</feature>
<feature type="topological domain" description="Cytoplasmic" evidence="13">
    <location>
        <begin position="764"/>
        <end position="773"/>
    </location>
</feature>
<feature type="transmembrane region" description="Helical; Name=S3 of repeat II" evidence="5">
    <location>
        <begin position="774"/>
        <end position="793"/>
    </location>
</feature>
<feature type="topological domain" description="Extracellular" evidence="13">
    <location>
        <begin position="794"/>
        <end position="797"/>
    </location>
</feature>
<feature type="transmembrane region" description="Helical; Name=S4 of repeat II" evidence="5">
    <location>
        <begin position="798"/>
        <end position="816"/>
    </location>
</feature>
<feature type="topological domain" description="Cytoplasmic" evidence="13">
    <location>
        <begin position="817"/>
        <end position="834"/>
    </location>
</feature>
<feature type="transmembrane region" description="Helical; Name=S5 of repeat II" evidence="5">
    <location>
        <begin position="835"/>
        <end position="855"/>
    </location>
</feature>
<feature type="topological domain" description="Extracellular" evidence="13">
    <location>
        <begin position="856"/>
        <end position="880"/>
    </location>
</feature>
<feature type="intramembrane region" description="Pore-forming" evidence="5">
    <location>
        <begin position="881"/>
        <end position="896"/>
    </location>
</feature>
<feature type="topological domain" description="Extracellular" evidence="13">
    <location>
        <begin position="897"/>
        <end position="907"/>
    </location>
</feature>
<feature type="transmembrane region" description="Helical; Name=S6 of repeat II" evidence="5">
    <location>
        <begin position="908"/>
        <end position="934"/>
    </location>
</feature>
<feature type="topological domain" description="Cytoplasmic" evidence="13">
    <location>
        <begin position="935"/>
        <end position="1157"/>
    </location>
</feature>
<feature type="transmembrane region" description="Helical; Name=S1 of repeat III" evidence="5">
    <location>
        <begin position="1158"/>
        <end position="1178"/>
    </location>
</feature>
<feature type="topological domain" description="Extracellular" evidence="13">
    <location>
        <begin position="1179"/>
        <end position="1190"/>
    </location>
</feature>
<feature type="transmembrane region" description="Helical; Name=S2 of repeat III" evidence="5">
    <location>
        <begin position="1191"/>
        <end position="1212"/>
    </location>
</feature>
<feature type="topological domain" description="Cytoplasmic" evidence="13">
    <location>
        <begin position="1213"/>
        <end position="1218"/>
    </location>
</feature>
<feature type="transmembrane region" description="Helical; Name=S3 of repeat III" evidence="5">
    <location>
        <begin position="1219"/>
        <end position="1244"/>
    </location>
</feature>
<feature type="topological domain" description="Extracellular" evidence="13">
    <location>
        <begin position="1245"/>
        <end position="1253"/>
    </location>
</feature>
<feature type="transmembrane region" description="Helical; Name=S4 of repeat III" evidence="5">
    <location>
        <begin position="1254"/>
        <end position="1272"/>
    </location>
</feature>
<feature type="topological domain" description="Cytoplasmic" evidence="13">
    <location>
        <begin position="1273"/>
        <end position="1285"/>
    </location>
</feature>
<feature type="transmembrane region" description="Helical; Name=S5 of repeat III" evidence="5">
    <location>
        <begin position="1286"/>
        <end position="1308"/>
    </location>
</feature>
<feature type="topological domain" description="Extracellular" evidence="13">
    <location>
        <begin position="1309"/>
        <end position="1354"/>
    </location>
</feature>
<feature type="intramembrane region" description="Pore-forming" evidence="5">
    <location>
        <begin position="1355"/>
        <end position="1371"/>
    </location>
</feature>
<feature type="topological domain" description="Extracellular" evidence="13">
    <location>
        <begin position="1372"/>
        <end position="1394"/>
    </location>
</feature>
<feature type="transmembrane region" description="Helical; Name=S6 of repeat III" evidence="5">
    <location>
        <begin position="1395"/>
        <end position="1420"/>
    </location>
</feature>
<feature type="topological domain" description="Cytoplasmic" evidence="13">
    <location>
        <begin position="1421"/>
        <end position="1478"/>
    </location>
</feature>
<feature type="transmembrane region" description="Helical; Name=S1 of repeat IV" evidence="5">
    <location>
        <begin position="1479"/>
        <end position="1497"/>
    </location>
</feature>
<feature type="topological domain" description="Extracellular" evidence="13">
    <location>
        <begin position="1498"/>
        <end position="1505"/>
    </location>
</feature>
<feature type="transmembrane region" description="Helical; Name=S2 of repeat IV" evidence="5">
    <location>
        <begin position="1506"/>
        <end position="1529"/>
    </location>
</feature>
<feature type="topological domain" description="Cytoplasmic" evidence="13">
    <location>
        <begin position="1530"/>
        <end position="1539"/>
    </location>
</feature>
<feature type="transmembrane region" description="Helical; Name=S3 of repeat IV" evidence="5">
    <location>
        <begin position="1540"/>
        <end position="1557"/>
    </location>
</feature>
<feature type="topological domain" description="Extracellular" evidence="13">
    <location>
        <begin position="1558"/>
        <end position="1569"/>
    </location>
</feature>
<feature type="transmembrane region" description="Helical; Name=S4 of repeat IV" evidence="5">
    <location>
        <begin position="1570"/>
        <end position="1592"/>
    </location>
</feature>
<feature type="topological domain" description="Cytoplasmic" evidence="13">
    <location>
        <begin position="1593"/>
        <end position="1605"/>
    </location>
</feature>
<feature type="transmembrane region" description="Helical; Name=S5 of repeat IV" evidence="5">
    <location>
        <begin position="1606"/>
        <end position="1629"/>
    </location>
</feature>
<feature type="topological domain" description="Extracellular" evidence="13">
    <location>
        <begin position="1630"/>
        <end position="1651"/>
    </location>
</feature>
<feature type="intramembrane region" description="Pore-forming" evidence="5">
    <location>
        <begin position="1652"/>
        <end position="1664"/>
    </location>
</feature>
<feature type="topological domain" description="Extracellular" evidence="13">
    <location>
        <begin position="1665"/>
        <end position="1696"/>
    </location>
</feature>
<feature type="transmembrane region" description="Helical; Name=S6 of repeat IV" evidence="5">
    <location>
        <begin position="1697"/>
        <end position="1722"/>
    </location>
</feature>
<feature type="topological domain" description="Cytoplasmic" evidence="13">
    <location>
        <begin position="1723"/>
        <end position="1947"/>
    </location>
</feature>
<feature type="repeat" description="I" evidence="13">
    <location>
        <begin position="110"/>
        <end position="455"/>
    </location>
</feature>
<feature type="repeat" description="II" evidence="13">
    <location>
        <begin position="693"/>
        <end position="965"/>
    </location>
</feature>
<feature type="repeat" description="III" evidence="13">
    <location>
        <begin position="1140"/>
        <end position="1451"/>
    </location>
</feature>
<feature type="repeat" description="IV" evidence="13">
    <location>
        <begin position="1460"/>
        <end position="1758"/>
    </location>
</feature>
<feature type="domain" description="IQ" evidence="7">
    <location>
        <begin position="1852"/>
        <end position="1881"/>
    </location>
</feature>
<feature type="region of interest" description="Disordered" evidence="8">
    <location>
        <begin position="28"/>
        <end position="60"/>
    </location>
</feature>
<feature type="region of interest" description="Disordered" evidence="8">
    <location>
        <begin position="493"/>
        <end position="529"/>
    </location>
</feature>
<feature type="region of interest" description="Disordered" evidence="8">
    <location>
        <begin position="587"/>
        <end position="632"/>
    </location>
</feature>
<feature type="region of interest" description="Disordered" evidence="8">
    <location>
        <begin position="1070"/>
        <end position="1113"/>
    </location>
</feature>
<feature type="region of interest" description="Disordered" evidence="8">
    <location>
        <begin position="1901"/>
        <end position="1947"/>
    </location>
</feature>
<feature type="compositionally biased region" description="Basic and acidic residues" evidence="8">
    <location>
        <begin position="46"/>
        <end position="57"/>
    </location>
</feature>
<feature type="compositionally biased region" description="Basic residues" evidence="8">
    <location>
        <begin position="500"/>
        <end position="509"/>
    </location>
</feature>
<feature type="compositionally biased region" description="Basic and acidic residues" evidence="8">
    <location>
        <begin position="510"/>
        <end position="529"/>
    </location>
</feature>
<feature type="compositionally biased region" description="Basic and acidic residues" evidence="8">
    <location>
        <begin position="596"/>
        <end position="622"/>
    </location>
</feature>
<feature type="compositionally biased region" description="Basic and acidic residues" evidence="8">
    <location>
        <begin position="1926"/>
        <end position="1947"/>
    </location>
</feature>
<feature type="modified residue" description="Phosphoserine" evidence="3">
    <location>
        <position position="484"/>
    </location>
</feature>
<feature type="modified residue" description="Phosphoserine" evidence="3">
    <location>
        <position position="485"/>
    </location>
</feature>
<feature type="modified residue" description="Phosphoserine" evidence="3">
    <location>
        <position position="486"/>
    </location>
</feature>
<feature type="modified residue" description="Phosphoserine" evidence="4">
    <location>
        <position position="1453"/>
    </location>
</feature>
<feature type="glycosylation site" description="N-linked (GlcNAc...) asparagine" evidence="6">
    <location>
        <position position="211"/>
    </location>
</feature>
<feature type="glycosylation site" description="N-linked (GlcNAc...) asparagine" evidence="6">
    <location>
        <position position="290"/>
    </location>
</feature>
<feature type="glycosylation site" description="N-linked (GlcNAc...) asparagine" evidence="6">
    <location>
        <position position="296"/>
    </location>
</feature>
<feature type="glycosylation site" description="N-linked (GlcNAc...) asparagine" evidence="6">
    <location>
        <position position="302"/>
    </location>
</feature>
<feature type="glycosylation site" description="N-linked (GlcNAc...) asparagine" evidence="6">
    <location>
        <position position="307"/>
    </location>
</feature>
<feature type="glycosylation site" description="N-linked (GlcNAc...) asparagine" evidence="6">
    <location>
        <position position="339"/>
    </location>
</feature>
<feature type="glycosylation site" description="N-linked (GlcNAc...) asparagine" evidence="6">
    <location>
        <position position="1318"/>
    </location>
</feature>
<feature type="glycosylation site" description="N-linked (GlcNAc...) asparagine" evidence="6">
    <location>
        <position position="1332"/>
    </location>
</feature>
<feature type="disulfide bond" description="Interchain; with SCN2B or SCN4B" evidence="5">
    <location>
        <position position="862"/>
    </location>
</feature>
<feature type="disulfide bond" description="Interchain; with the conotoxin GVIIJ (when the channel is not linked to SCN2B or SCN4B; the bond to SCN2B or SCN4B protects the channel from the inhibition by toxin)" evidence="2">
    <location>
        <position position="862"/>
    </location>
</feature>
<feature type="disulfide bond" evidence="5">
    <location>
        <begin position="864"/>
        <end position="870"/>
    </location>
</feature>
<feature type="disulfide bond" evidence="5">
    <location>
        <begin position="902"/>
        <end position="911"/>
    </location>
</feature>
<feature type="disulfide bond" evidence="5">
    <location>
        <begin position="1316"/>
        <end position="1336"/>
    </location>
</feature>
<feature type="splice variant" id="VSP_059662" description="In isoform 3.">
    <original>D</original>
    <variation>S</variation>
    <location>
        <position position="208"/>
    </location>
</feature>
<feature type="splice variant" id="VSP_059663" description="In isoform 2 and isoform 3.">
    <original>N</original>
    <variation>NVSQ</variation>
    <location>
        <position position="624"/>
    </location>
</feature>
<feature type="sequence variant" evidence="11">
    <original>K</original>
    <variation>R</variation>
    <location>
        <position position="494"/>
    </location>
</feature>
<dbReference type="EMBL" id="KM373689">
    <property type="protein sequence ID" value="AIW80041.1"/>
    <property type="molecule type" value="mRNA"/>
</dbReference>
<dbReference type="EMBL" id="KM373690">
    <property type="protein sequence ID" value="AIW80042.1"/>
    <property type="molecule type" value="mRNA"/>
</dbReference>
<dbReference type="EMBL" id="AL772235">
    <property type="status" value="NOT_ANNOTATED_CDS"/>
    <property type="molecule type" value="Genomic_DNA"/>
</dbReference>
<dbReference type="EMBL" id="AL928621">
    <property type="status" value="NOT_ANNOTATED_CDS"/>
    <property type="molecule type" value="Genomic_DNA"/>
</dbReference>
<dbReference type="CCDS" id="CCDS50596.1">
    <molecule id="A2ASI5-1"/>
</dbReference>
<dbReference type="RefSeq" id="NP_001342097.1">
    <molecule id="A2ASI5-2"/>
    <property type="nucleotide sequence ID" value="NM_001355168.1"/>
</dbReference>
<dbReference type="RefSeq" id="NP_001342098.1">
    <molecule id="A2ASI5-3"/>
    <property type="nucleotide sequence ID" value="NM_001355169.1"/>
</dbReference>
<dbReference type="RefSeq" id="NP_061202.3">
    <molecule id="A2ASI5-1"/>
    <property type="nucleotide sequence ID" value="NM_018732.3"/>
</dbReference>
<dbReference type="RefSeq" id="XP_011237695.1">
    <property type="nucleotide sequence ID" value="XM_011239393.1"/>
</dbReference>
<dbReference type="RefSeq" id="XP_017172210.1">
    <property type="nucleotide sequence ID" value="XM_017316721.1"/>
</dbReference>
<dbReference type="SMR" id="A2ASI5"/>
<dbReference type="FunCoup" id="A2ASI5">
    <property type="interactions" value="758"/>
</dbReference>
<dbReference type="STRING" id="10090.ENSMUSP00000097647"/>
<dbReference type="GlyConnect" id="2719">
    <property type="glycosylation" value="1 N-Linked glycan (1 site)"/>
</dbReference>
<dbReference type="GlyCosmos" id="A2ASI5">
    <property type="glycosylation" value="8 sites, 1 glycan"/>
</dbReference>
<dbReference type="GlyGen" id="A2ASI5">
    <property type="glycosylation" value="10 sites, 5 N-linked glycans (3 sites)"/>
</dbReference>
<dbReference type="iPTMnet" id="A2ASI5"/>
<dbReference type="PhosphoSitePlus" id="A2ASI5"/>
<dbReference type="SwissPalm" id="A2ASI5"/>
<dbReference type="PaxDb" id="10090-ENSMUSP00000097647"/>
<dbReference type="PeptideAtlas" id="A2ASI5"/>
<dbReference type="ProteomicsDB" id="341494">
    <molecule id="A2ASI5-1"/>
</dbReference>
<dbReference type="Antibodypedia" id="33767">
    <property type="antibodies" value="133 antibodies from 24 providers"/>
</dbReference>
<dbReference type="DNASU" id="20269"/>
<dbReference type="Ensembl" id="ENSMUST00000100069.9">
    <molecule id="A2ASI5-1"/>
    <property type="protein sequence ID" value="ENSMUSP00000097647.3"/>
    <property type="gene ID" value="ENSMUSG00000057182.17"/>
</dbReference>
<dbReference type="GeneID" id="20269"/>
<dbReference type="KEGG" id="mmu:20269"/>
<dbReference type="UCSC" id="uc012bwa.1">
    <molecule id="A2ASI5-1"/>
    <property type="organism name" value="mouse"/>
</dbReference>
<dbReference type="AGR" id="MGI:98249"/>
<dbReference type="CTD" id="6328"/>
<dbReference type="MGI" id="MGI:98249">
    <property type="gene designation" value="Scn3a"/>
</dbReference>
<dbReference type="VEuPathDB" id="HostDB:ENSMUSG00000057182"/>
<dbReference type="eggNOG" id="KOG2301">
    <property type="taxonomic scope" value="Eukaryota"/>
</dbReference>
<dbReference type="GeneTree" id="ENSGT00940000157130"/>
<dbReference type="HOGENOM" id="CLU_000540_5_0_1"/>
<dbReference type="InParanoid" id="A2ASI5"/>
<dbReference type="OMA" id="CDAWLKI"/>
<dbReference type="OrthoDB" id="2984333at2759"/>
<dbReference type="PhylomeDB" id="A2ASI5"/>
<dbReference type="TreeFam" id="TF323985"/>
<dbReference type="BioGRID-ORCS" id="20269">
    <property type="hits" value="1 hit in 77 CRISPR screens"/>
</dbReference>
<dbReference type="ChiTaRS" id="Scn3a">
    <property type="organism name" value="mouse"/>
</dbReference>
<dbReference type="PRO" id="PR:A2ASI5"/>
<dbReference type="Proteomes" id="UP000000589">
    <property type="component" value="Chromosome 2"/>
</dbReference>
<dbReference type="RNAct" id="A2ASI5">
    <property type="molecule type" value="protein"/>
</dbReference>
<dbReference type="Bgee" id="ENSMUSG00000057182">
    <property type="expression patterns" value="Expressed in superior cervical ganglion and 124 other cell types or tissues"/>
</dbReference>
<dbReference type="ExpressionAtlas" id="A2ASI5">
    <property type="expression patterns" value="baseline and differential"/>
</dbReference>
<dbReference type="GO" id="GO:0009925">
    <property type="term" value="C:basal plasma membrane"/>
    <property type="evidence" value="ECO:0007669"/>
    <property type="project" value="UniProtKB-SubCell"/>
</dbReference>
<dbReference type="GO" id="GO:0016020">
    <property type="term" value="C:membrane"/>
    <property type="evidence" value="ECO:0000314"/>
    <property type="project" value="MGI"/>
</dbReference>
<dbReference type="GO" id="GO:0005886">
    <property type="term" value="C:plasma membrane"/>
    <property type="evidence" value="ECO:0000304"/>
    <property type="project" value="Reactome"/>
</dbReference>
<dbReference type="GO" id="GO:0016528">
    <property type="term" value="C:sarcoplasm"/>
    <property type="evidence" value="ECO:0000314"/>
    <property type="project" value="MGI"/>
</dbReference>
<dbReference type="GO" id="GO:0001518">
    <property type="term" value="C:voltage-gated sodium channel complex"/>
    <property type="evidence" value="ECO:0007669"/>
    <property type="project" value="Ensembl"/>
</dbReference>
<dbReference type="GO" id="GO:0005272">
    <property type="term" value="F:sodium channel activity"/>
    <property type="evidence" value="ECO:0000304"/>
    <property type="project" value="Reactome"/>
</dbReference>
<dbReference type="GO" id="GO:0005248">
    <property type="term" value="F:voltage-gated sodium channel activity"/>
    <property type="evidence" value="ECO:0007669"/>
    <property type="project" value="Ensembl"/>
</dbReference>
<dbReference type="GO" id="GO:0048266">
    <property type="term" value="P:behavioral response to pain"/>
    <property type="evidence" value="ECO:0000315"/>
    <property type="project" value="MGI"/>
</dbReference>
<dbReference type="GO" id="GO:0086010">
    <property type="term" value="P:membrane depolarization during action potential"/>
    <property type="evidence" value="ECO:0007669"/>
    <property type="project" value="Ensembl"/>
</dbReference>
<dbReference type="CDD" id="cd13433">
    <property type="entry name" value="Na_channel_gate"/>
    <property type="match status" value="1"/>
</dbReference>
<dbReference type="FunFam" id="1.10.238.10:FF:000002">
    <property type="entry name" value="Sodium channel protein"/>
    <property type="match status" value="1"/>
</dbReference>
<dbReference type="FunFam" id="1.10.287.70:FF:000001">
    <property type="entry name" value="Sodium channel protein"/>
    <property type="match status" value="1"/>
</dbReference>
<dbReference type="FunFam" id="1.10.287.70:FF:000003">
    <property type="entry name" value="Sodium channel protein"/>
    <property type="match status" value="1"/>
</dbReference>
<dbReference type="FunFam" id="1.10.287.70:FF:000006">
    <property type="entry name" value="Sodium channel protein"/>
    <property type="match status" value="1"/>
</dbReference>
<dbReference type="FunFam" id="1.20.120.350:FF:000002">
    <property type="entry name" value="Sodium channel protein"/>
    <property type="match status" value="1"/>
</dbReference>
<dbReference type="FunFam" id="1.20.120.350:FF:000004">
    <property type="entry name" value="Sodium channel protein"/>
    <property type="match status" value="1"/>
</dbReference>
<dbReference type="FunFam" id="1.20.120.350:FF:000005">
    <property type="entry name" value="Sodium channel protein"/>
    <property type="match status" value="1"/>
</dbReference>
<dbReference type="FunFam" id="1.20.5.1190:FF:000001">
    <property type="entry name" value="Sodium channel protein"/>
    <property type="match status" value="1"/>
</dbReference>
<dbReference type="FunFam" id="1.20.120.350:FF:000003">
    <property type="entry name" value="Voltage-dependent sodium channel"/>
    <property type="match status" value="1"/>
</dbReference>
<dbReference type="Gene3D" id="1.10.287.70">
    <property type="match status" value="4"/>
</dbReference>
<dbReference type="Gene3D" id="1.10.238.10">
    <property type="entry name" value="EF-hand"/>
    <property type="match status" value="1"/>
</dbReference>
<dbReference type="Gene3D" id="1.20.5.1190">
    <property type="entry name" value="iswi atpase"/>
    <property type="match status" value="1"/>
</dbReference>
<dbReference type="Gene3D" id="1.20.120.350">
    <property type="entry name" value="Voltage-gated potassium channels. Chain C"/>
    <property type="match status" value="4"/>
</dbReference>
<dbReference type="InterPro" id="IPR005821">
    <property type="entry name" value="Ion_trans_dom"/>
</dbReference>
<dbReference type="InterPro" id="IPR001696">
    <property type="entry name" value="Na_channel_asu"/>
</dbReference>
<dbReference type="InterPro" id="IPR044564">
    <property type="entry name" value="Na_chnl_inactivation_gate"/>
</dbReference>
<dbReference type="InterPro" id="IPR010526">
    <property type="entry name" value="Na_trans_assoc_dom"/>
</dbReference>
<dbReference type="InterPro" id="IPR024583">
    <property type="entry name" value="Na_trans_cytopl"/>
</dbReference>
<dbReference type="InterPro" id="IPR043203">
    <property type="entry name" value="VGCC_Ca_Na"/>
</dbReference>
<dbReference type="InterPro" id="IPR027359">
    <property type="entry name" value="Volt_channel_dom_sf"/>
</dbReference>
<dbReference type="PANTHER" id="PTHR10037:SF237">
    <property type="entry name" value="SODIUM CHANNEL PROTEIN TYPE 3 SUBUNIT ALPHA"/>
    <property type="match status" value="1"/>
</dbReference>
<dbReference type="PANTHER" id="PTHR10037">
    <property type="entry name" value="VOLTAGE-GATED CATION CHANNEL CALCIUM AND SODIUM"/>
    <property type="match status" value="1"/>
</dbReference>
<dbReference type="Pfam" id="PF00520">
    <property type="entry name" value="Ion_trans"/>
    <property type="match status" value="4"/>
</dbReference>
<dbReference type="Pfam" id="PF24609">
    <property type="entry name" value="IQ_SCN5A_C"/>
    <property type="match status" value="1"/>
</dbReference>
<dbReference type="Pfam" id="PF06512">
    <property type="entry name" value="Na_trans_assoc"/>
    <property type="match status" value="1"/>
</dbReference>
<dbReference type="Pfam" id="PF11933">
    <property type="entry name" value="Na_trans_cytopl"/>
    <property type="match status" value="1"/>
</dbReference>
<dbReference type="PRINTS" id="PR00170">
    <property type="entry name" value="NACHANNEL"/>
</dbReference>
<dbReference type="SUPFAM" id="SSF81324">
    <property type="entry name" value="Voltage-gated potassium channels"/>
    <property type="match status" value="4"/>
</dbReference>
<sequence>MAQALLVPPGPESFRLFTRESLAAIEKRAAEEKAKKPKKEQDIDDENKPKPNSDLEAGKNLPFIYGDIPPEMVSEPLEDLDPYYVSKKTFVVLNKGKAIFRFSATSALYILTPLNPVRKIAIKILVHSLFSMLIMCTILTNCVFMTLSNPPDWTKNVEYTFTGIYTFESLIKILARGFCLEDFTFLRDPWNWLDFSVIVMAYVTEFVDLGNVSALRTFRVLRALKTISVIPGLKTIVGALIQSVKKLSDVMILTVFCLSVFALIGLQLFMGNLRNKCLQWPPSDSAFEINTTSYFNGTMDSNGTFVNVTMSTFNWKDYIADDSHFYVLDGQKDPLLCGNGSDAGQCPEGYICVKAGRNPNYGYTSFDTFSWAFLSLFRLMTQDYWENLYQLTLRAAGKTYMIFFVLVIFLGSFYLVNLILAVVAMAYEEQNQATLEEAEQKEAEFQQMLEQLKKQQEEAQAVAAASAASRDFSGIGGLGELLESSSEASKLSSKSAKEWRNRRKKRRQREHLEGNHRPEGDRFPKSESEDSVKRRSFLFSLDGNPLSGDKKLCSPHQSLLSIRGSLFSPRRNSKTSIFSFRGRAKDVGSENDFADDEHSTFEDSESRRDSLFVPHRPGERRNSNGTTTETEVRKRRLSSYQISMEMLEDSSGRQRAMSIASILTNTMEELEESRQKCPPCWYRFANVFLIWDCCDSWLKVKHLVNLIVMDPFVDLAITICIVLNTLFMAMEHYPMTEQFSSVLTVGNLVFTGIFTAEMVLKIIAMDPYYYFQEGWNIFDGIIVSLSLMELGLANVEGLSVLRSFRLLRVFKLAKSWPTLNMLIKIIGNSVGALGNLTLVLAIIVFIFAVVGMQLFGKSYKECVCKINEDCKLPRWHMNDFFHSFLIVFRVLCGEWIETMWDCMEVAGQTMCLIVFMLVMVIGNLVVLNLFLALLLSSFSSDNLAATDDDNEMNNLQIAVGRMQKGIDYVKNKIRECFRKAFFRKPKVIEIHEGNKIDSCMSNNTGVVEISKELNYLKDGNGTTSGVGTGSSVEKYVIDENDYMSFINNPSLTVTVPIAVGESDFENLNTEEFSSESELEESKEKLNATSSSEGSTVDVAPPREGEQAEIEPEEDLKPEACFTEGCIKKFPFCQVSTEEGKGKIWWNLRKTCYSIVEHNWFETFIVFMILLSSGALAFEDIYIEQRKTIKTMLEYADKVFTYIFILEMLLKWVAYGFQTYFTNAWCWLDFLIVDVSLVSLVANALGYSELGAIKSLRTLRALRPLRALSRFEGMRVVVNALVGAIPSIMNVLLVCLIFWLIFSIMGVNLFAGKFYHCVNMTTGSMFDMSEVNNFSDCQALGKQARWKNVKVNFDNVGAGYLALLQVATFKGWMDIMYAAVDSRDVKLQPVYEENLYMYLYFVIFIIFGSFFTLNLFIGVIIDNFNQQKKKFGGQDIFMTEEQKKYYNAMKKLGSKKPQKPIPRPANKFQGMVFDFVTRQVFDISIMILICLNMVTMMVETDDQSKYMTLVLSRINLVFIVLFTGEFLLKLISLRYYYFTIGWNIFDFVVVILSIVGMFLAELIEKYFVSPTLFRVIRLARIGRILRLIKGAKGIRTLLFALMMSLPALFNIGLLLFLVMFIYAIFGMSNFAYVKKEAGIDDMFNFETFGNSMICLFQITTSAGWDGLLAPILNSAPPDCDPDAIHPGSSVKGDCGNPSVGIFFFVSYIIISFLVVVNMYIAVILENFSVATEESAEPLSEDDFEMFYEVWEKFDPDATQFIEFCKLSDFAAALDPPLLIAKPNKVQLIAMDLPMVSGDRIHCLDILFAFTKRVLGESGEMDALRIQMEDRFMASNPSKVSYEPITTTLKRKQEEVSAAIIQRNYRCYLLKQRLKNISNTYDKETIKGRIVLPIKGDMVIDKLNGNSTPEKTDGSSSTTSPPSYDSVTKPDKEKFEKDKPEKESKGKEV</sequence>
<proteinExistence type="evidence at protein level"/>
<keyword id="KW-0025">Alternative splicing</keyword>
<keyword id="KW-1003">Cell membrane</keyword>
<keyword id="KW-1015">Disulfide bond</keyword>
<keyword id="KW-0325">Glycoprotein</keyword>
<keyword id="KW-0407">Ion channel</keyword>
<keyword id="KW-0406">Ion transport</keyword>
<keyword id="KW-0472">Membrane</keyword>
<keyword id="KW-0597">Phosphoprotein</keyword>
<keyword id="KW-1185">Reference proteome</keyword>
<keyword id="KW-0677">Repeat</keyword>
<keyword id="KW-0915">Sodium</keyword>
<keyword id="KW-0894">Sodium channel</keyword>
<keyword id="KW-0739">Sodium transport</keyword>
<keyword id="KW-0812">Transmembrane</keyword>
<keyword id="KW-1133">Transmembrane helix</keyword>
<keyword id="KW-0813">Transport</keyword>
<keyword id="KW-0832">Ubl conjugation</keyword>
<keyword id="KW-0851">Voltage-gated channel</keyword>
<gene>
    <name evidence="16" type="primary">Scn3a</name>
</gene>
<evidence type="ECO:0000250" key="1"/>
<evidence type="ECO:0000250" key="2">
    <source>
        <dbReference type="UniProtKB" id="P04775"/>
    </source>
</evidence>
<evidence type="ECO:0000250" key="3">
    <source>
        <dbReference type="UniProtKB" id="P08104"/>
    </source>
</evidence>
<evidence type="ECO:0000250" key="4">
    <source>
        <dbReference type="UniProtKB" id="Q14524"/>
    </source>
</evidence>
<evidence type="ECO:0000250" key="5">
    <source>
        <dbReference type="UniProtKB" id="Q9NY46"/>
    </source>
</evidence>
<evidence type="ECO:0000255" key="6"/>
<evidence type="ECO:0000255" key="7">
    <source>
        <dbReference type="PROSITE-ProRule" id="PRU00116"/>
    </source>
</evidence>
<evidence type="ECO:0000256" key="8">
    <source>
        <dbReference type="SAM" id="MobiDB-lite"/>
    </source>
</evidence>
<evidence type="ECO:0000269" key="9">
    <source>
    </source>
</evidence>
<evidence type="ECO:0000269" key="10">
    <source>
    </source>
</evidence>
<evidence type="ECO:0000269" key="11">
    <source>
    </source>
</evidence>
<evidence type="ECO:0000269" key="12">
    <source>
    </source>
</evidence>
<evidence type="ECO:0000305" key="13"/>
<evidence type="ECO:0000305" key="14">
    <source>
    </source>
</evidence>
<evidence type="ECO:0000305" key="15">
    <source>
    </source>
</evidence>
<evidence type="ECO:0000312" key="16">
    <source>
        <dbReference type="MGI" id="MGI:98249"/>
    </source>
</evidence>
<comment type="function">
    <text evidence="9 12">Pore-forming subunit of Nav1.3, a voltage-gated sodium (Nav) channel that directly mediates the depolarizing phase of action potentials in excitable membranes. Navs, also called VGSCs (voltage-gated sodium channels) or VDSCs (voltage-dependent sodium channels), operate by switching between closed and open conformations depending on the voltage difference across the membrane. In the open conformation they allow Na(+) ions to selectively pass through the pore, along their electrochemical gradient. The influx of Na+ ions provokes membrane depolarization, initiating the propagation of electrical signals throughout cells and tissues (PubMed:29142310). In some secretory cell types, it also participates in cell excitability through membrane depolarization and regulates cells responsiveness to stimuli triggering secretion. For instance, it controls the release of serotonin/5-hydroxytryptamine by enterochromaffin cells and is required for both glucagon- and glucose-induced insulin secretion in pancreatic endocrine cells (PubMed:25172946, PubMed:29142310).</text>
</comment>
<comment type="catalytic activity">
    <reaction evidence="14 15">
        <text>Na(+)(in) = Na(+)(out)</text>
        <dbReference type="Rhea" id="RHEA:34963"/>
        <dbReference type="ChEBI" id="CHEBI:29101"/>
    </reaction>
</comment>
<comment type="subunit">
    <text evidence="5">Heterooligomer of an alpha subunit, SCN3A, and 1 to 3 regulatory beta subunits including SCN1B and SCN2B; disulfide-linked with some beta subunits like SCN2B. Interacts with NEDD4L; could regulate expression of SCN3A at the plasma membrane through ubiquitination-regulated endocytosis.</text>
</comment>
<comment type="subcellular location">
    <subcellularLocation>
        <location evidence="5">Cell membrane</location>
        <topology evidence="5">Multi-pass membrane protein</topology>
    </subcellularLocation>
    <subcellularLocation>
        <location evidence="12">Basal cell membrane</location>
        <topology evidence="5">Multi-pass membrane protein</topology>
    </subcellularLocation>
    <text evidence="12">In enterochromaffin cells, localized highly asymmetrically, almost exclusively at the basal side.</text>
</comment>
<comment type="alternative products">
    <event type="alternative splicing"/>
    <isoform>
        <id>A2ASI5-1</id>
        <name>1</name>
        <sequence type="displayed"/>
    </isoform>
    <isoform>
        <id>A2ASI5-2</id>
        <name>2</name>
        <name>CbmNav1.3a</name>
        <sequence type="described" ref="VSP_059663"/>
    </isoform>
    <isoform>
        <id>A2ASI5-3</id>
        <name>3</name>
        <name>CbmNav1.3b</name>
        <sequence type="described" ref="VSP_059662 VSP_059663"/>
    </isoform>
</comment>
<comment type="tissue specificity">
    <text evidence="9 12">Expressed in enterochromaffin cells in both colon and small bowel (at protein level) (PubMed:29142310). Expressed in pancreatic alpha and beta cells (PubMed:25172946).</text>
</comment>
<comment type="developmental stage">
    <text evidence="10">Expressed in the hippocampus at late embryonic stages and during the first week after birth. Down-regulated after postnatal day 7.</text>
</comment>
<comment type="domain">
    <text evidence="1">The sequence contains 4 internal repeats, each with 5 hydrophobic segments (S1, S2, S3, S5, S6) and one positively charged segment (S4). Segments S4 are probably the voltage-sensors and are characterized by a series of positively charged amino acids at every third position.</text>
</comment>
<comment type="PTM">
    <text evidence="5">May be ubiquitinated by NEDD4L; which would promote its endocytosis.</text>
</comment>
<comment type="PTM">
    <text evidence="4">Phosphorylation at Ser-1453 in a highly conserved cytoplasmic loop slows inactivation of the channel and reduces peak sodium currents.</text>
</comment>
<comment type="similarity">
    <text evidence="13">Belongs to the sodium channel (TC 1.A.1.10) family. Nav1.3/SCN3A subfamily.</text>
</comment>
<reference key="1">
    <citation type="journal article" date="2015" name="Protein Cell">
        <title>Dissection of voltage-gated sodium channels in developing cochlear sensory epithelia.</title>
        <authorList>
            <person name="Zhou Y."/>
            <person name="Fang F.H."/>
            <person name="Liu Z.R."/>
            <person name="Ji Y.H."/>
        </authorList>
    </citation>
    <scope>NUCLEOTIDE SEQUENCE [MRNA] (ISOFORMS 2 AND 3)</scope>
    <scope>ALTERNATIVE SPLICING</scope>
    <scope>VARIANT ARG-494</scope>
    <source>
        <strain>C57BL/6J</strain>
        <tissue>Cochlea</tissue>
    </source>
</reference>
<reference key="2">
    <citation type="journal article" date="2009" name="PLoS Biol.">
        <title>Lineage-specific biology revealed by a finished genome assembly of the mouse.</title>
        <authorList>
            <person name="Church D.M."/>
            <person name="Goodstadt L."/>
            <person name="Hillier L.W."/>
            <person name="Zody M.C."/>
            <person name="Goldstein S."/>
            <person name="She X."/>
            <person name="Bult C.J."/>
            <person name="Agarwala R."/>
            <person name="Cherry J.L."/>
            <person name="DiCuccio M."/>
            <person name="Hlavina W."/>
            <person name="Kapustin Y."/>
            <person name="Meric P."/>
            <person name="Maglott D."/>
            <person name="Birtle Z."/>
            <person name="Marques A.C."/>
            <person name="Graves T."/>
            <person name="Zhou S."/>
            <person name="Teague B."/>
            <person name="Potamousis K."/>
            <person name="Churas C."/>
            <person name="Place M."/>
            <person name="Herschleb J."/>
            <person name="Runnheim R."/>
            <person name="Forrest D."/>
            <person name="Amos-Landgraf J."/>
            <person name="Schwartz D.C."/>
            <person name="Cheng Z."/>
            <person name="Lindblad-Toh K."/>
            <person name="Eichler E.E."/>
            <person name="Ponting C.P."/>
        </authorList>
    </citation>
    <scope>NUCLEOTIDE SEQUENCE [LARGE SCALE GENOMIC DNA]</scope>
    <source>
        <strain>C57BL/6J</strain>
    </source>
</reference>
<reference key="3">
    <citation type="journal article" date="2014" name="J. Physiol. (Lond.)">
        <title>Na+ current properties in islet alpha- and beta-cells reflect cell-specific Scn3a and Scn9a expression.</title>
        <authorList>
            <person name="Zhang Q."/>
            <person name="Chibalina M.V."/>
            <person name="Bengtsson M."/>
            <person name="Groschner L.N."/>
            <person name="Ramracheya R."/>
            <person name="Rorsman N.J."/>
            <person name="Leiss V."/>
            <person name="Nassar M.A."/>
            <person name="Welling A."/>
            <person name="Gribble F.M."/>
            <person name="Reimann F."/>
            <person name="Hofmann F."/>
            <person name="Wood J.N."/>
            <person name="Ashcroft F.M."/>
            <person name="Rorsman P."/>
        </authorList>
    </citation>
    <scope>FUNCTION</scope>
    <scope>TRANSPORTER ACTIVITY</scope>
    <scope>TISSUE SPECIFICITY</scope>
</reference>
<reference key="4">
    <citation type="journal article" date="2015" name="Biochim. Biophys. Acta">
        <title>Alteration of Scn3a expression is mediated via CpG methylation and MBD2 in mouse hippocampus during postnatal development and seizure condition.</title>
        <authorList>
            <person name="Li H.J."/>
            <person name="Wan R.P."/>
            <person name="Tang L.J."/>
            <person name="Liu S.J."/>
            <person name="Zhao Q.H."/>
            <person name="Gao M.M."/>
            <person name="Yi Y.H."/>
            <person name="Liao W.P."/>
            <person name="Sun X.F."/>
            <person name="Long Y.S."/>
        </authorList>
    </citation>
    <scope>DEVELOPMENTAL STAGE</scope>
</reference>
<reference key="5">
    <citation type="journal article" date="2017" name="Sci. Rep.">
        <title>1.3 is important for enterochromaffin cell excitability and serotonin release.</title>
        <authorList>
            <person name="Strege P.R."/>
            <person name="Knutson K."/>
            <person name="Eggers S.J."/>
            <person name="Li J.H."/>
            <person name="Wang F."/>
            <person name="Linden D."/>
            <person name="Szurszewski J.H."/>
            <person name="Milescu L."/>
            <person name="Leiter A.B."/>
            <person name="Farrugia G."/>
            <person name="Beyder A."/>
        </authorList>
    </citation>
    <scope>FUNCTION</scope>
    <scope>TRANSPORTER ACTIVITY</scope>
    <scope>SUBCELLULAR LOCATION</scope>
    <scope>TISSUE SPECIFICITY</scope>
</reference>
<name>SCN3A_MOUSE</name>
<protein>
    <recommendedName>
        <fullName evidence="13">Sodium channel protein type 3 subunit alpha</fullName>
    </recommendedName>
    <alternativeName>
        <fullName>Sodium channel protein brain III subunit alpha</fullName>
    </alternativeName>
    <alternativeName>
        <fullName>Sodium channel protein type III subunit alpha</fullName>
    </alternativeName>
    <alternativeName>
        <fullName>Voltage-gated sodium channel subtype III</fullName>
    </alternativeName>
    <alternativeName>
        <fullName>Voltage-gated sodium channel subunit alpha Nav1.3</fullName>
    </alternativeName>
</protein>
<organism>
    <name type="scientific">Mus musculus</name>
    <name type="common">Mouse</name>
    <dbReference type="NCBI Taxonomy" id="10090"/>
    <lineage>
        <taxon>Eukaryota</taxon>
        <taxon>Metazoa</taxon>
        <taxon>Chordata</taxon>
        <taxon>Craniata</taxon>
        <taxon>Vertebrata</taxon>
        <taxon>Euteleostomi</taxon>
        <taxon>Mammalia</taxon>
        <taxon>Eutheria</taxon>
        <taxon>Euarchontoglires</taxon>
        <taxon>Glires</taxon>
        <taxon>Rodentia</taxon>
        <taxon>Myomorpha</taxon>
        <taxon>Muroidea</taxon>
        <taxon>Muridae</taxon>
        <taxon>Murinae</taxon>
        <taxon>Mus</taxon>
        <taxon>Mus</taxon>
    </lineage>
</organism>